<reference key="1">
    <citation type="journal article" date="2007" name="J. Bacteriol.">
        <title>The genome sequence of avian pathogenic Escherichia coli strain O1:K1:H7 shares strong similarities with human extraintestinal pathogenic E. coli genomes.</title>
        <authorList>
            <person name="Johnson T.J."/>
            <person name="Kariyawasam S."/>
            <person name="Wannemuehler Y."/>
            <person name="Mangiamele P."/>
            <person name="Johnson S.J."/>
            <person name="Doetkott C."/>
            <person name="Skyberg J.A."/>
            <person name="Lynne A.M."/>
            <person name="Johnson J.R."/>
            <person name="Nolan L.K."/>
        </authorList>
    </citation>
    <scope>NUCLEOTIDE SEQUENCE [LARGE SCALE GENOMIC DNA]</scope>
</reference>
<name>SYE_ECOK1</name>
<gene>
    <name evidence="1" type="primary">gltX</name>
    <name type="ordered locus">Ecok1_23180</name>
    <name type="ORF">APECO1_4141</name>
</gene>
<sequence>MKIKTRFAPSPTGYLHVGGARTALYSWLFARNHGGEFVLRIEDTDLERSTPEAIEAIMDGMNWLSLEWDEGPYYQTKRFDRYNAVIDQMLEEGTAYKCYCSKERLEALREEQMAKGEKPRYDGRCRHSHEHHADDEPCVVRFANPQEGSVVFDDQIRGPIEFSNQELDDLIIRRTDGSPTYNFCVVVDDWDMEITHVIRGEDHINNTPRQINILKALKAPVPVYAHVSMINGDDGKKLSKRHGAVSVMQYRDDGYLPEALLNYLVRLGWSHGDQEIFTREEMIKYFTLNAVSKSASAFNTDKLLWLNHHYINALPPEYVATHLQWHIEQENIDTRNGPQLADLVKLLGERCKTLKEMAQSCRYFYEDFAEFDADAAKKHLRPVARQPLEVVRDKLTAITDWTAENVHHAIQATADELEVGMGKVGMPLRVAVTGAGQSPALDVTVHAIGKTRSIERINKALAFIAERENQH</sequence>
<keyword id="KW-0030">Aminoacyl-tRNA synthetase</keyword>
<keyword id="KW-0067">ATP-binding</keyword>
<keyword id="KW-0963">Cytoplasm</keyword>
<keyword id="KW-0436">Ligase</keyword>
<keyword id="KW-0479">Metal-binding</keyword>
<keyword id="KW-0547">Nucleotide-binding</keyword>
<keyword id="KW-0648">Protein biosynthesis</keyword>
<keyword id="KW-1185">Reference proteome</keyword>
<keyword id="KW-0862">Zinc</keyword>
<dbReference type="EC" id="6.1.1.17" evidence="1"/>
<dbReference type="EMBL" id="CP000468">
    <property type="protein sequence ID" value="ABJ01812.1"/>
    <property type="molecule type" value="Genomic_DNA"/>
</dbReference>
<dbReference type="RefSeq" id="WP_000695661.1">
    <property type="nucleotide sequence ID" value="NZ_CADILS010000022.1"/>
</dbReference>
<dbReference type="SMR" id="A1ADS2"/>
<dbReference type="KEGG" id="ecv:APECO1_4141"/>
<dbReference type="HOGENOM" id="CLU_015768_6_0_6"/>
<dbReference type="Proteomes" id="UP000008216">
    <property type="component" value="Chromosome"/>
</dbReference>
<dbReference type="GO" id="GO:0005829">
    <property type="term" value="C:cytosol"/>
    <property type="evidence" value="ECO:0007669"/>
    <property type="project" value="TreeGrafter"/>
</dbReference>
<dbReference type="GO" id="GO:0005524">
    <property type="term" value="F:ATP binding"/>
    <property type="evidence" value="ECO:0007669"/>
    <property type="project" value="UniProtKB-UniRule"/>
</dbReference>
<dbReference type="GO" id="GO:0004818">
    <property type="term" value="F:glutamate-tRNA ligase activity"/>
    <property type="evidence" value="ECO:0007669"/>
    <property type="project" value="UniProtKB-UniRule"/>
</dbReference>
<dbReference type="GO" id="GO:0000049">
    <property type="term" value="F:tRNA binding"/>
    <property type="evidence" value="ECO:0007669"/>
    <property type="project" value="InterPro"/>
</dbReference>
<dbReference type="GO" id="GO:0008270">
    <property type="term" value="F:zinc ion binding"/>
    <property type="evidence" value="ECO:0007669"/>
    <property type="project" value="UniProtKB-UniRule"/>
</dbReference>
<dbReference type="GO" id="GO:0006424">
    <property type="term" value="P:glutamyl-tRNA aminoacylation"/>
    <property type="evidence" value="ECO:0007669"/>
    <property type="project" value="UniProtKB-UniRule"/>
</dbReference>
<dbReference type="CDD" id="cd00808">
    <property type="entry name" value="GluRS_core"/>
    <property type="match status" value="1"/>
</dbReference>
<dbReference type="FunFam" id="1.10.10.350:FF:000001">
    <property type="entry name" value="Glutamate--tRNA ligase"/>
    <property type="match status" value="1"/>
</dbReference>
<dbReference type="FunFam" id="3.40.50.620:FF:000007">
    <property type="entry name" value="Glutamate--tRNA ligase"/>
    <property type="match status" value="1"/>
</dbReference>
<dbReference type="Gene3D" id="1.10.10.350">
    <property type="match status" value="1"/>
</dbReference>
<dbReference type="Gene3D" id="3.40.50.620">
    <property type="entry name" value="HUPs"/>
    <property type="match status" value="1"/>
</dbReference>
<dbReference type="HAMAP" id="MF_00022">
    <property type="entry name" value="Glu_tRNA_synth_type1"/>
    <property type="match status" value="1"/>
</dbReference>
<dbReference type="InterPro" id="IPR045462">
    <property type="entry name" value="aa-tRNA-synth_I_cd-bd"/>
</dbReference>
<dbReference type="InterPro" id="IPR020751">
    <property type="entry name" value="aa-tRNA-synth_I_codon-bd_sub2"/>
</dbReference>
<dbReference type="InterPro" id="IPR001412">
    <property type="entry name" value="aa-tRNA-synth_I_CS"/>
</dbReference>
<dbReference type="InterPro" id="IPR008925">
    <property type="entry name" value="aa_tRNA-synth_I_cd-bd_sf"/>
</dbReference>
<dbReference type="InterPro" id="IPR004527">
    <property type="entry name" value="Glu-tRNA-ligase_bac/mito"/>
</dbReference>
<dbReference type="InterPro" id="IPR000924">
    <property type="entry name" value="Glu/Gln-tRNA-synth"/>
</dbReference>
<dbReference type="InterPro" id="IPR020058">
    <property type="entry name" value="Glu/Gln-tRNA-synth_Ib_cat-dom"/>
</dbReference>
<dbReference type="InterPro" id="IPR049940">
    <property type="entry name" value="GluQ/Sye"/>
</dbReference>
<dbReference type="InterPro" id="IPR033910">
    <property type="entry name" value="GluRS_core"/>
</dbReference>
<dbReference type="InterPro" id="IPR014729">
    <property type="entry name" value="Rossmann-like_a/b/a_fold"/>
</dbReference>
<dbReference type="NCBIfam" id="TIGR00464">
    <property type="entry name" value="gltX_bact"/>
    <property type="match status" value="1"/>
</dbReference>
<dbReference type="PANTHER" id="PTHR43311">
    <property type="entry name" value="GLUTAMATE--TRNA LIGASE"/>
    <property type="match status" value="1"/>
</dbReference>
<dbReference type="PANTHER" id="PTHR43311:SF2">
    <property type="entry name" value="GLUTAMATE--TRNA LIGASE, MITOCHONDRIAL-RELATED"/>
    <property type="match status" value="1"/>
</dbReference>
<dbReference type="Pfam" id="PF19269">
    <property type="entry name" value="Anticodon_2"/>
    <property type="match status" value="1"/>
</dbReference>
<dbReference type="Pfam" id="PF00749">
    <property type="entry name" value="tRNA-synt_1c"/>
    <property type="match status" value="1"/>
</dbReference>
<dbReference type="PRINTS" id="PR00987">
    <property type="entry name" value="TRNASYNTHGLU"/>
</dbReference>
<dbReference type="SUPFAM" id="SSF48163">
    <property type="entry name" value="An anticodon-binding domain of class I aminoacyl-tRNA synthetases"/>
    <property type="match status" value="1"/>
</dbReference>
<dbReference type="SUPFAM" id="SSF52374">
    <property type="entry name" value="Nucleotidylyl transferase"/>
    <property type="match status" value="1"/>
</dbReference>
<dbReference type="PROSITE" id="PS00178">
    <property type="entry name" value="AA_TRNA_LIGASE_I"/>
    <property type="match status" value="1"/>
</dbReference>
<feature type="chain" id="PRO_1000001895" description="Glutamate--tRNA ligase">
    <location>
        <begin position="1"/>
        <end position="471"/>
    </location>
</feature>
<feature type="short sequence motif" description="'HIGH' region" evidence="1">
    <location>
        <begin position="9"/>
        <end position="19"/>
    </location>
</feature>
<feature type="short sequence motif" description="'KMSKS' region" evidence="1">
    <location>
        <begin position="237"/>
        <end position="241"/>
    </location>
</feature>
<feature type="binding site" evidence="1">
    <location>
        <position position="98"/>
    </location>
    <ligand>
        <name>Zn(2+)</name>
        <dbReference type="ChEBI" id="CHEBI:29105"/>
    </ligand>
</feature>
<feature type="binding site" evidence="1">
    <location>
        <position position="100"/>
    </location>
    <ligand>
        <name>Zn(2+)</name>
        <dbReference type="ChEBI" id="CHEBI:29105"/>
    </ligand>
</feature>
<feature type="binding site" evidence="1">
    <location>
        <position position="125"/>
    </location>
    <ligand>
        <name>Zn(2+)</name>
        <dbReference type="ChEBI" id="CHEBI:29105"/>
    </ligand>
</feature>
<feature type="binding site" evidence="1">
    <location>
        <position position="127"/>
    </location>
    <ligand>
        <name>Zn(2+)</name>
        <dbReference type="ChEBI" id="CHEBI:29105"/>
    </ligand>
</feature>
<feature type="binding site" evidence="1">
    <location>
        <position position="240"/>
    </location>
    <ligand>
        <name>ATP</name>
        <dbReference type="ChEBI" id="CHEBI:30616"/>
    </ligand>
</feature>
<evidence type="ECO:0000255" key="1">
    <source>
        <dbReference type="HAMAP-Rule" id="MF_00022"/>
    </source>
</evidence>
<protein>
    <recommendedName>
        <fullName evidence="1">Glutamate--tRNA ligase</fullName>
        <ecNumber evidence="1">6.1.1.17</ecNumber>
    </recommendedName>
    <alternativeName>
        <fullName evidence="1">Glutamyl-tRNA synthetase</fullName>
        <shortName evidence="1">GluRS</shortName>
    </alternativeName>
</protein>
<comment type="function">
    <text evidence="1">Catalyzes the attachment of glutamate to tRNA(Glu) in a two-step reaction: glutamate is first activated by ATP to form Glu-AMP and then transferred to the acceptor end of tRNA(Glu).</text>
</comment>
<comment type="catalytic activity">
    <reaction evidence="1">
        <text>tRNA(Glu) + L-glutamate + ATP = L-glutamyl-tRNA(Glu) + AMP + diphosphate</text>
        <dbReference type="Rhea" id="RHEA:23540"/>
        <dbReference type="Rhea" id="RHEA-COMP:9663"/>
        <dbReference type="Rhea" id="RHEA-COMP:9680"/>
        <dbReference type="ChEBI" id="CHEBI:29985"/>
        <dbReference type="ChEBI" id="CHEBI:30616"/>
        <dbReference type="ChEBI" id="CHEBI:33019"/>
        <dbReference type="ChEBI" id="CHEBI:78442"/>
        <dbReference type="ChEBI" id="CHEBI:78520"/>
        <dbReference type="ChEBI" id="CHEBI:456215"/>
        <dbReference type="EC" id="6.1.1.17"/>
    </reaction>
</comment>
<comment type="cofactor">
    <cofactor evidence="1">
        <name>Zn(2+)</name>
        <dbReference type="ChEBI" id="CHEBI:29105"/>
    </cofactor>
    <text evidence="1">Binds 1 zinc ion per subunit.</text>
</comment>
<comment type="subunit">
    <text evidence="1">Monomer.</text>
</comment>
<comment type="subcellular location">
    <subcellularLocation>
        <location evidence="1">Cytoplasm</location>
    </subcellularLocation>
</comment>
<comment type="similarity">
    <text evidence="1">Belongs to the class-I aminoacyl-tRNA synthetase family. Glutamate--tRNA ligase type 1 subfamily.</text>
</comment>
<accession>A1ADS2</accession>
<proteinExistence type="inferred from homology"/>
<organism>
    <name type="scientific">Escherichia coli O1:K1 / APEC</name>
    <dbReference type="NCBI Taxonomy" id="405955"/>
    <lineage>
        <taxon>Bacteria</taxon>
        <taxon>Pseudomonadati</taxon>
        <taxon>Pseudomonadota</taxon>
        <taxon>Gammaproteobacteria</taxon>
        <taxon>Enterobacterales</taxon>
        <taxon>Enterobacteriaceae</taxon>
        <taxon>Escherichia</taxon>
    </lineage>
</organism>